<sequence length="285" mass="32600">MSFIDRNDGGENSIDVDTLRTMIDLYSKNFVEVSSDVEIKTNNIVDKLFAYFKKHNITVINAGIIANNSELIDEDLLDLGTINNGILSLNIQPVTITVDLKSGILNSVKYHQSKLINILLDKNIDPIKIEPKIHLLLSTYKQYEPLVRLVRMKSQVNDFDFVYPLAAHGELDIIKLVMHYYQLQDEIIGKICVQAIMNGRVNIVEHFLTSEAFRSAPDLMYGFFIRGIEHGGHINITKYFIDKGLCIQQNDYEPVKVAAMTKRRDILKYFYELDNSIVNIIIDNV</sequence>
<reference key="1">
    <citation type="journal article" date="2004" name="Science">
        <title>The 1.2-megabase genome sequence of Mimivirus.</title>
        <authorList>
            <person name="Raoult D."/>
            <person name="Audic S."/>
            <person name="Robert C."/>
            <person name="Abergel C."/>
            <person name="Renesto P."/>
            <person name="Ogata H."/>
            <person name="La Scola B."/>
            <person name="Susan M."/>
            <person name="Claverie J.-M."/>
        </authorList>
    </citation>
    <scope>NUCLEOTIDE SEQUENCE [LARGE SCALE GENOMIC DNA]</scope>
    <source>
        <strain>Rowbotham-Bradford</strain>
    </source>
</reference>
<accession>Q5UR37</accession>
<proteinExistence type="predicted"/>
<feature type="chain" id="PRO_0000247365" description="Putative ankyrin repeat protein R551">
    <location>
        <begin position="1"/>
        <end position="285"/>
    </location>
</feature>
<feature type="repeat" description="ANK 1">
    <location>
        <begin position="99"/>
        <end position="129"/>
    </location>
</feature>
<feature type="repeat" description="ANK 2">
    <location>
        <begin position="157"/>
        <end position="186"/>
    </location>
</feature>
<feature type="repeat" description="ANK 3">
    <location>
        <begin position="188"/>
        <end position="214"/>
    </location>
</feature>
<feature type="repeat" description="ANK 4">
    <location>
        <begin position="215"/>
        <end position="249"/>
    </location>
</feature>
<organismHost>
    <name type="scientific">Acanthamoeba polyphaga</name>
    <name type="common">Amoeba</name>
    <dbReference type="NCBI Taxonomy" id="5757"/>
</organismHost>
<gene>
    <name type="ordered locus">MIMI_R551</name>
</gene>
<dbReference type="EMBL" id="AY653733">
    <property type="protein sequence ID" value="AAV50815.1"/>
    <property type="molecule type" value="Genomic_DNA"/>
</dbReference>
<dbReference type="SMR" id="Q5UR37"/>
<dbReference type="KEGG" id="vg:9925186"/>
<dbReference type="OrthoDB" id="21860at10239"/>
<dbReference type="Proteomes" id="UP000001134">
    <property type="component" value="Genome"/>
</dbReference>
<dbReference type="InterPro" id="IPR036770">
    <property type="entry name" value="Ankyrin_rpt-contain_sf"/>
</dbReference>
<dbReference type="SUPFAM" id="SSF48403">
    <property type="entry name" value="Ankyrin repeat"/>
    <property type="match status" value="1"/>
</dbReference>
<protein>
    <recommendedName>
        <fullName>Putative ankyrin repeat protein R551</fullName>
    </recommendedName>
</protein>
<keyword id="KW-0040">ANK repeat</keyword>
<keyword id="KW-1185">Reference proteome</keyword>
<keyword id="KW-0677">Repeat</keyword>
<organism>
    <name type="scientific">Acanthamoeba polyphaga mimivirus</name>
    <name type="common">APMV</name>
    <dbReference type="NCBI Taxonomy" id="212035"/>
    <lineage>
        <taxon>Viruses</taxon>
        <taxon>Varidnaviria</taxon>
        <taxon>Bamfordvirae</taxon>
        <taxon>Nucleocytoviricota</taxon>
        <taxon>Megaviricetes</taxon>
        <taxon>Imitervirales</taxon>
        <taxon>Mimiviridae</taxon>
        <taxon>Megamimivirinae</taxon>
        <taxon>Mimivirus</taxon>
        <taxon>Mimivirus bradfordmassiliense</taxon>
    </lineage>
</organism>
<name>YR551_MIMIV</name>